<organism>
    <name type="scientific">Bifidobacterium longum (strain NCC 2705)</name>
    <dbReference type="NCBI Taxonomy" id="206672"/>
    <lineage>
        <taxon>Bacteria</taxon>
        <taxon>Bacillati</taxon>
        <taxon>Actinomycetota</taxon>
        <taxon>Actinomycetes</taxon>
        <taxon>Bifidobacteriales</taxon>
        <taxon>Bifidobacteriaceae</taxon>
        <taxon>Bifidobacterium</taxon>
    </lineage>
</organism>
<keyword id="KW-0548">Nucleotidyltransferase</keyword>
<keyword id="KW-1185">Reference proteome</keyword>
<keyword id="KW-0694">RNA-binding</keyword>
<keyword id="KW-0698">rRNA processing</keyword>
<keyword id="KW-0808">Transferase</keyword>
<keyword id="KW-0819">tRNA processing</keyword>
<keyword id="KW-0820">tRNA-binding</keyword>
<dbReference type="EC" id="2.7.7.56" evidence="1"/>
<dbReference type="EMBL" id="AE014295">
    <property type="protein sequence ID" value="AAN24126.1"/>
    <property type="status" value="ALT_INIT"/>
    <property type="molecule type" value="Genomic_DNA"/>
</dbReference>
<dbReference type="RefSeq" id="NP_695490.1">
    <property type="nucleotide sequence ID" value="NC_004307.2"/>
</dbReference>
<dbReference type="SMR" id="Q8G7I0"/>
<dbReference type="STRING" id="206672.BL0286"/>
<dbReference type="EnsemblBacteria" id="AAN24126">
    <property type="protein sequence ID" value="AAN24126"/>
    <property type="gene ID" value="BL0286"/>
</dbReference>
<dbReference type="KEGG" id="blo:BL0286"/>
<dbReference type="PATRIC" id="fig|206672.9.peg.1022"/>
<dbReference type="HOGENOM" id="CLU_050858_0_0_11"/>
<dbReference type="OrthoDB" id="9802265at2"/>
<dbReference type="Proteomes" id="UP000000439">
    <property type="component" value="Chromosome"/>
</dbReference>
<dbReference type="GO" id="GO:0000175">
    <property type="term" value="F:3'-5'-RNA exonuclease activity"/>
    <property type="evidence" value="ECO:0007669"/>
    <property type="project" value="UniProtKB-UniRule"/>
</dbReference>
<dbReference type="GO" id="GO:0000049">
    <property type="term" value="F:tRNA binding"/>
    <property type="evidence" value="ECO:0007669"/>
    <property type="project" value="UniProtKB-UniRule"/>
</dbReference>
<dbReference type="GO" id="GO:0009022">
    <property type="term" value="F:tRNA nucleotidyltransferase activity"/>
    <property type="evidence" value="ECO:0007669"/>
    <property type="project" value="UniProtKB-UniRule"/>
</dbReference>
<dbReference type="GO" id="GO:0016075">
    <property type="term" value="P:rRNA catabolic process"/>
    <property type="evidence" value="ECO:0007669"/>
    <property type="project" value="UniProtKB-UniRule"/>
</dbReference>
<dbReference type="GO" id="GO:0006364">
    <property type="term" value="P:rRNA processing"/>
    <property type="evidence" value="ECO:0007669"/>
    <property type="project" value="UniProtKB-KW"/>
</dbReference>
<dbReference type="GO" id="GO:0008033">
    <property type="term" value="P:tRNA processing"/>
    <property type="evidence" value="ECO:0007669"/>
    <property type="project" value="UniProtKB-UniRule"/>
</dbReference>
<dbReference type="CDD" id="cd11362">
    <property type="entry name" value="RNase_PH_bact"/>
    <property type="match status" value="1"/>
</dbReference>
<dbReference type="FunFam" id="3.30.230.70:FF:000003">
    <property type="entry name" value="Ribonuclease PH"/>
    <property type="match status" value="1"/>
</dbReference>
<dbReference type="Gene3D" id="3.30.230.70">
    <property type="entry name" value="GHMP Kinase, N-terminal domain"/>
    <property type="match status" value="1"/>
</dbReference>
<dbReference type="HAMAP" id="MF_00564">
    <property type="entry name" value="RNase_PH"/>
    <property type="match status" value="1"/>
</dbReference>
<dbReference type="InterPro" id="IPR001247">
    <property type="entry name" value="ExoRNase_PH_dom1"/>
</dbReference>
<dbReference type="InterPro" id="IPR015847">
    <property type="entry name" value="ExoRNase_PH_dom2"/>
</dbReference>
<dbReference type="InterPro" id="IPR036345">
    <property type="entry name" value="ExoRNase_PH_dom2_sf"/>
</dbReference>
<dbReference type="InterPro" id="IPR027408">
    <property type="entry name" value="PNPase/RNase_PH_dom_sf"/>
</dbReference>
<dbReference type="InterPro" id="IPR020568">
    <property type="entry name" value="Ribosomal_Su5_D2-typ_SF"/>
</dbReference>
<dbReference type="InterPro" id="IPR050080">
    <property type="entry name" value="RNase_PH"/>
</dbReference>
<dbReference type="InterPro" id="IPR002381">
    <property type="entry name" value="RNase_PH_bac-type"/>
</dbReference>
<dbReference type="InterPro" id="IPR018336">
    <property type="entry name" value="RNase_PH_CS"/>
</dbReference>
<dbReference type="NCBIfam" id="TIGR01966">
    <property type="entry name" value="RNasePH"/>
    <property type="match status" value="1"/>
</dbReference>
<dbReference type="PANTHER" id="PTHR11953">
    <property type="entry name" value="EXOSOME COMPLEX COMPONENT"/>
    <property type="match status" value="1"/>
</dbReference>
<dbReference type="PANTHER" id="PTHR11953:SF0">
    <property type="entry name" value="EXOSOME COMPLEX COMPONENT RRP41"/>
    <property type="match status" value="1"/>
</dbReference>
<dbReference type="Pfam" id="PF01138">
    <property type="entry name" value="RNase_PH"/>
    <property type="match status" value="1"/>
</dbReference>
<dbReference type="Pfam" id="PF03725">
    <property type="entry name" value="RNase_PH_C"/>
    <property type="match status" value="1"/>
</dbReference>
<dbReference type="SUPFAM" id="SSF55666">
    <property type="entry name" value="Ribonuclease PH domain 2-like"/>
    <property type="match status" value="1"/>
</dbReference>
<dbReference type="SUPFAM" id="SSF54211">
    <property type="entry name" value="Ribosomal protein S5 domain 2-like"/>
    <property type="match status" value="1"/>
</dbReference>
<dbReference type="PROSITE" id="PS01277">
    <property type="entry name" value="RIBONUCLEASE_PH"/>
    <property type="match status" value="1"/>
</dbReference>
<reference key="1">
    <citation type="journal article" date="2002" name="Proc. Natl. Acad. Sci. U.S.A.">
        <title>The genome sequence of Bifidobacterium longum reflects its adaptation to the human gastrointestinal tract.</title>
        <authorList>
            <person name="Schell M.A."/>
            <person name="Karmirantzou M."/>
            <person name="Snel B."/>
            <person name="Vilanova D."/>
            <person name="Berger B."/>
            <person name="Pessi G."/>
            <person name="Zwahlen M.-C."/>
            <person name="Desiere F."/>
            <person name="Bork P."/>
            <person name="Delley M."/>
            <person name="Pridmore R.D."/>
            <person name="Arigoni F."/>
        </authorList>
    </citation>
    <scope>NUCLEOTIDE SEQUENCE [LARGE SCALE GENOMIC DNA]</scope>
    <source>
        <strain>NCC 2705</strain>
    </source>
</reference>
<accession>Q8G7I0</accession>
<name>RNPH_BIFLO</name>
<sequence length="248" mass="27101">MLGNHQIIRADGRKVDELRPVRITRHFTDAPEGSVLIECGNTRVMCTATFTPGVPRWRKDSGLGWVTAEYSMLPRATAERTDRESVRGKIGGRTHEISRLIGRCLRGVIDMKALGENQIQLDCDVLQADGGTRTASVTGAYVALVDAVNWAEKHRHIKSASRVLKDYVSAVSVGVINGTPMLDLPYIEDSQAMTDMNVAMTGSGTFIEIQGTAEHRPFNRAELGTLLDLAEKGNKELQAAQRAALSLD</sequence>
<protein>
    <recommendedName>
        <fullName evidence="1">Ribonuclease PH</fullName>
        <shortName evidence="1">RNase PH</shortName>
        <ecNumber evidence="1">2.7.7.56</ecNumber>
    </recommendedName>
    <alternativeName>
        <fullName evidence="1">tRNA nucleotidyltransferase</fullName>
    </alternativeName>
</protein>
<gene>
    <name evidence="1" type="primary">rph</name>
    <name type="ordered locus">BL0286</name>
</gene>
<evidence type="ECO:0000255" key="1">
    <source>
        <dbReference type="HAMAP-Rule" id="MF_00564"/>
    </source>
</evidence>
<evidence type="ECO:0000305" key="2"/>
<comment type="function">
    <text evidence="1">Phosphorolytic 3'-5' exoribonuclease that plays an important role in tRNA 3'-end maturation. Removes nucleotide residues following the 3'-CCA terminus of tRNAs; can also add nucleotides to the ends of RNA molecules by using nucleoside diphosphates as substrates, but this may not be physiologically important. Probably plays a role in initiation of 16S rRNA degradation (leading to ribosome degradation) during starvation.</text>
</comment>
<comment type="catalytic activity">
    <reaction evidence="1">
        <text>tRNA(n+1) + phosphate = tRNA(n) + a ribonucleoside 5'-diphosphate</text>
        <dbReference type="Rhea" id="RHEA:10628"/>
        <dbReference type="Rhea" id="RHEA-COMP:17343"/>
        <dbReference type="Rhea" id="RHEA-COMP:17344"/>
        <dbReference type="ChEBI" id="CHEBI:43474"/>
        <dbReference type="ChEBI" id="CHEBI:57930"/>
        <dbReference type="ChEBI" id="CHEBI:173114"/>
        <dbReference type="EC" id="2.7.7.56"/>
    </reaction>
</comment>
<comment type="subunit">
    <text evidence="1">Homohexameric ring arranged as a trimer of dimers.</text>
</comment>
<comment type="similarity">
    <text evidence="1">Belongs to the RNase PH family.</text>
</comment>
<comment type="sequence caution" evidence="2">
    <conflict type="erroneous initiation">
        <sequence resource="EMBL-CDS" id="AAN24126"/>
    </conflict>
    <text>Extended N-terminus.</text>
</comment>
<feature type="chain" id="PRO_0000139871" description="Ribonuclease PH">
    <location>
        <begin position="1"/>
        <end position="248"/>
    </location>
</feature>
<feature type="binding site" evidence="1">
    <location>
        <position position="93"/>
    </location>
    <ligand>
        <name>phosphate</name>
        <dbReference type="ChEBI" id="CHEBI:43474"/>
        <note>substrate</note>
    </ligand>
</feature>
<feature type="binding site" evidence="1">
    <location>
        <begin position="131"/>
        <end position="133"/>
    </location>
    <ligand>
        <name>phosphate</name>
        <dbReference type="ChEBI" id="CHEBI:43474"/>
        <note>substrate</note>
    </ligand>
</feature>
<proteinExistence type="inferred from homology"/>